<protein>
    <recommendedName>
        <fullName evidence="1">Arginine deiminase</fullName>
        <shortName evidence="1">ADI</shortName>
        <ecNumber evidence="1">3.5.3.6</ecNumber>
    </recommendedName>
    <alternativeName>
        <fullName evidence="1">Arginine dihydrolase</fullName>
        <shortName evidence="1">AD</shortName>
    </alternativeName>
</protein>
<comment type="catalytic activity">
    <reaction evidence="1">
        <text>L-arginine + H2O = L-citrulline + NH4(+)</text>
        <dbReference type="Rhea" id="RHEA:19597"/>
        <dbReference type="ChEBI" id="CHEBI:15377"/>
        <dbReference type="ChEBI" id="CHEBI:28938"/>
        <dbReference type="ChEBI" id="CHEBI:32682"/>
        <dbReference type="ChEBI" id="CHEBI:57743"/>
        <dbReference type="EC" id="3.5.3.6"/>
    </reaction>
</comment>
<comment type="pathway">
    <text evidence="1">Amino-acid degradation; L-arginine degradation via ADI pathway; carbamoyl phosphate from L-arginine: step 1/2.</text>
</comment>
<comment type="subcellular location">
    <subcellularLocation>
        <location evidence="1">Cytoplasm</location>
    </subcellularLocation>
</comment>
<comment type="similarity">
    <text evidence="1">Belongs to the arginine deiminase family.</text>
</comment>
<reference key="1">
    <citation type="submission" date="2005-09" db="EMBL/GenBank/DDBJ databases">
        <authorList>
            <person name="Glass J.I."/>
            <person name="Lartigue C."/>
            <person name="Pfannkoch C."/>
            <person name="Baden-Tillson H."/>
            <person name="Smith H.O."/>
            <person name="Venter J.C."/>
            <person name="Roske K."/>
            <person name="Wise K.S."/>
            <person name="Calcutt M.J."/>
            <person name="Nelson W.C."/>
            <person name="Nierman W.C."/>
        </authorList>
    </citation>
    <scope>NUCLEOTIDE SEQUENCE [LARGE SCALE GENOMIC DNA]</scope>
    <source>
        <strain>California kid / ATCC 27343 / NCTC 10154</strain>
    </source>
</reference>
<dbReference type="EC" id="3.5.3.6" evidence="1"/>
<dbReference type="EMBL" id="CP000123">
    <property type="protein sequence ID" value="ABC01474.1"/>
    <property type="molecule type" value="Genomic_DNA"/>
</dbReference>
<dbReference type="RefSeq" id="WP_011386989.1">
    <property type="nucleotide sequence ID" value="NC_007633.1"/>
</dbReference>
<dbReference type="SMR" id="Q2ST29"/>
<dbReference type="GeneID" id="23778957"/>
<dbReference type="KEGG" id="mcp:MCAP_0089"/>
<dbReference type="HOGENOM" id="CLU_052662_0_1_14"/>
<dbReference type="PhylomeDB" id="Q2ST29"/>
<dbReference type="UniPathway" id="UPA00254">
    <property type="reaction ID" value="UER00364"/>
</dbReference>
<dbReference type="Proteomes" id="UP000001928">
    <property type="component" value="Chromosome"/>
</dbReference>
<dbReference type="GO" id="GO:0005737">
    <property type="term" value="C:cytoplasm"/>
    <property type="evidence" value="ECO:0007669"/>
    <property type="project" value="UniProtKB-SubCell"/>
</dbReference>
<dbReference type="GO" id="GO:0016990">
    <property type="term" value="F:arginine deiminase activity"/>
    <property type="evidence" value="ECO:0007669"/>
    <property type="project" value="UniProtKB-UniRule"/>
</dbReference>
<dbReference type="GO" id="GO:0019547">
    <property type="term" value="P:arginine catabolic process to ornithine"/>
    <property type="evidence" value="ECO:0007669"/>
    <property type="project" value="UniProtKB-UniRule"/>
</dbReference>
<dbReference type="GO" id="GO:0019546">
    <property type="term" value="P:arginine deiminase pathway"/>
    <property type="evidence" value="ECO:0007669"/>
    <property type="project" value="TreeGrafter"/>
</dbReference>
<dbReference type="Gene3D" id="1.10.3930.10">
    <property type="entry name" value="Arginine deiminase"/>
    <property type="match status" value="1"/>
</dbReference>
<dbReference type="Gene3D" id="3.75.10.10">
    <property type="entry name" value="L-arginine/glycine Amidinotransferase, Chain A"/>
    <property type="match status" value="1"/>
</dbReference>
<dbReference type="HAMAP" id="MF_00242">
    <property type="entry name" value="Arg_deiminase"/>
    <property type="match status" value="1"/>
</dbReference>
<dbReference type="InterPro" id="IPR003876">
    <property type="entry name" value="Arg_deiminase"/>
</dbReference>
<dbReference type="NCBIfam" id="NF002381">
    <property type="entry name" value="PRK01388.1"/>
    <property type="match status" value="1"/>
</dbReference>
<dbReference type="PANTHER" id="PTHR47271">
    <property type="entry name" value="ARGININE DEIMINASE"/>
    <property type="match status" value="1"/>
</dbReference>
<dbReference type="PANTHER" id="PTHR47271:SF2">
    <property type="entry name" value="ARGININE DEIMINASE"/>
    <property type="match status" value="1"/>
</dbReference>
<dbReference type="Pfam" id="PF02274">
    <property type="entry name" value="ADI"/>
    <property type="match status" value="1"/>
</dbReference>
<dbReference type="PIRSF" id="PIRSF006356">
    <property type="entry name" value="Arg_deiminase"/>
    <property type="match status" value="1"/>
</dbReference>
<dbReference type="PRINTS" id="PR01466">
    <property type="entry name" value="ARGDEIMINASE"/>
</dbReference>
<dbReference type="SUPFAM" id="SSF55909">
    <property type="entry name" value="Pentein"/>
    <property type="match status" value="1"/>
</dbReference>
<keyword id="KW-0056">Arginine metabolism</keyword>
<keyword id="KW-0963">Cytoplasm</keyword>
<keyword id="KW-0378">Hydrolase</keyword>
<accession>Q2ST29</accession>
<organism>
    <name type="scientific">Mycoplasma capricolum subsp. capricolum (strain California kid / ATCC 27343 / NCTC 10154)</name>
    <dbReference type="NCBI Taxonomy" id="340047"/>
    <lineage>
        <taxon>Bacteria</taxon>
        <taxon>Bacillati</taxon>
        <taxon>Mycoplasmatota</taxon>
        <taxon>Mollicutes</taxon>
        <taxon>Mycoplasmataceae</taxon>
        <taxon>Mycoplasma</taxon>
    </lineage>
</organism>
<sequence length="403" mass="46587">MEKKINVFSEIGTLKTVLVHRPGDEIENLTPELLERLLFDDVPFKDVAVKEHDAFTKIMRDNGVEVLYIEKLAAETLDQHPDLREKFIDQFISEANIEDKYKEKYRDFISSLDNYRMIKKMIAGTKKLELGIDEGYKAYPFIADPLPNVLFQRDPFSSVGFGITMNRMWSVTRNRETIFPDLVFKHHNRFANQVPYYYERDWKEETIEGGDILVLNKETLIIGVTQRTTLKAIEKFSERLFNDPESSYSKVIALDLPKSRAFMHLDTVFTNIDYDKFIAHPLIFDCIDEFKIYEVSKQGTKEVKKTLIELLSDAAGREVQIIRCGGNDVVGASREQWNDGTNVVALRPGKVIAYERNWITIDLLRKAGVEVLTIASSELSRGRGGPRCMTMPLWREDLQEIKR</sequence>
<name>ARCA_MYCCT</name>
<gene>
    <name evidence="1" type="primary">arcA</name>
    <name type="ordered locus">MCAP_0089</name>
</gene>
<feature type="chain" id="PRO_0000336669" description="Arginine deiminase">
    <location>
        <begin position="1"/>
        <end position="403"/>
    </location>
</feature>
<feature type="active site" description="Amidino-cysteine intermediate" evidence="1">
    <location>
        <position position="388"/>
    </location>
</feature>
<evidence type="ECO:0000255" key="1">
    <source>
        <dbReference type="HAMAP-Rule" id="MF_00242"/>
    </source>
</evidence>
<proteinExistence type="inferred from homology"/>